<comment type="function">
    <text evidence="1">Methyltransferase required for the conversion of demethylmenaquinol (DMKH2) to menaquinol (MKH2) and the conversion of 2-polyprenyl-6-methoxy-1,4-benzoquinol (DDMQH2) to 2-polyprenyl-3-methyl-6-methoxy-1,4-benzoquinol (DMQH2).</text>
</comment>
<comment type="catalytic activity">
    <reaction evidence="1">
        <text>a 2-demethylmenaquinol + S-adenosyl-L-methionine = a menaquinol + S-adenosyl-L-homocysteine + H(+)</text>
        <dbReference type="Rhea" id="RHEA:42640"/>
        <dbReference type="Rhea" id="RHEA-COMP:9539"/>
        <dbReference type="Rhea" id="RHEA-COMP:9563"/>
        <dbReference type="ChEBI" id="CHEBI:15378"/>
        <dbReference type="ChEBI" id="CHEBI:18151"/>
        <dbReference type="ChEBI" id="CHEBI:55437"/>
        <dbReference type="ChEBI" id="CHEBI:57856"/>
        <dbReference type="ChEBI" id="CHEBI:59789"/>
        <dbReference type="EC" id="2.1.1.163"/>
    </reaction>
</comment>
<comment type="catalytic activity">
    <reaction evidence="1">
        <text>a 2-methoxy-6-(all-trans-polyprenyl)benzene-1,4-diol + S-adenosyl-L-methionine = a 5-methoxy-2-methyl-3-(all-trans-polyprenyl)benzene-1,4-diol + S-adenosyl-L-homocysteine + H(+)</text>
        <dbReference type="Rhea" id="RHEA:28286"/>
        <dbReference type="Rhea" id="RHEA-COMP:10858"/>
        <dbReference type="Rhea" id="RHEA-COMP:10859"/>
        <dbReference type="ChEBI" id="CHEBI:15378"/>
        <dbReference type="ChEBI" id="CHEBI:57856"/>
        <dbReference type="ChEBI" id="CHEBI:59789"/>
        <dbReference type="ChEBI" id="CHEBI:84166"/>
        <dbReference type="ChEBI" id="CHEBI:84167"/>
        <dbReference type="EC" id="2.1.1.201"/>
    </reaction>
</comment>
<comment type="pathway">
    <text evidence="1">Quinol/quinone metabolism; menaquinone biosynthesis; menaquinol from 1,4-dihydroxy-2-naphthoate: step 2/2.</text>
</comment>
<comment type="pathway">
    <text evidence="1">Cofactor biosynthesis; ubiquinone biosynthesis.</text>
</comment>
<comment type="similarity">
    <text evidence="1">Belongs to the class I-like SAM-binding methyltransferase superfamily. MenG/UbiE family.</text>
</comment>
<name>UBIE_SALTY</name>
<keyword id="KW-0474">Menaquinone biosynthesis</keyword>
<keyword id="KW-0489">Methyltransferase</keyword>
<keyword id="KW-1185">Reference proteome</keyword>
<keyword id="KW-0949">S-adenosyl-L-methionine</keyword>
<keyword id="KW-0808">Transferase</keyword>
<keyword id="KW-0831">Ubiquinone biosynthesis</keyword>
<dbReference type="EC" id="2.1.1.163" evidence="1"/>
<dbReference type="EC" id="2.1.1.201" evidence="1"/>
<dbReference type="EMBL" id="AF233324">
    <property type="protein sequence ID" value="AAF33422.1"/>
    <property type="molecule type" value="Genomic_DNA"/>
</dbReference>
<dbReference type="EMBL" id="AE006468">
    <property type="protein sequence ID" value="AAL22814.1"/>
    <property type="molecule type" value="Genomic_DNA"/>
</dbReference>
<dbReference type="RefSeq" id="NP_462855.1">
    <property type="nucleotide sequence ID" value="NC_003197.2"/>
</dbReference>
<dbReference type="RefSeq" id="WP_000229009.1">
    <property type="nucleotide sequence ID" value="NC_003197.2"/>
</dbReference>
<dbReference type="SMR" id="P0A2K5"/>
<dbReference type="STRING" id="99287.STM3970"/>
<dbReference type="PaxDb" id="99287-STM3970"/>
<dbReference type="DNASU" id="1255496"/>
<dbReference type="GeneID" id="1255496"/>
<dbReference type="KEGG" id="stm:STM3970"/>
<dbReference type="PATRIC" id="fig|99287.12.peg.4189"/>
<dbReference type="HOGENOM" id="CLU_037990_0_0_6"/>
<dbReference type="OMA" id="MNDVMSM"/>
<dbReference type="PhylomeDB" id="P0A2K5"/>
<dbReference type="BioCyc" id="SENT99287:STM3970-MONOMER"/>
<dbReference type="UniPathway" id="UPA00079">
    <property type="reaction ID" value="UER00169"/>
</dbReference>
<dbReference type="UniPathway" id="UPA00232"/>
<dbReference type="Proteomes" id="UP000001014">
    <property type="component" value="Chromosome"/>
</dbReference>
<dbReference type="GO" id="GO:0008425">
    <property type="term" value="F:2-methoxy-6-polyprenyl-1,4-benzoquinol methyltransferase activity"/>
    <property type="evidence" value="ECO:0000318"/>
    <property type="project" value="GO_Central"/>
</dbReference>
<dbReference type="GO" id="GO:0043770">
    <property type="term" value="F:demethylmenaquinone methyltransferase activity"/>
    <property type="evidence" value="ECO:0007669"/>
    <property type="project" value="UniProtKB-UniRule"/>
</dbReference>
<dbReference type="GO" id="GO:0009060">
    <property type="term" value="P:aerobic respiration"/>
    <property type="evidence" value="ECO:0007669"/>
    <property type="project" value="UniProtKB-UniRule"/>
</dbReference>
<dbReference type="GO" id="GO:0009234">
    <property type="term" value="P:menaquinone biosynthetic process"/>
    <property type="evidence" value="ECO:0007669"/>
    <property type="project" value="UniProtKB-UniRule"/>
</dbReference>
<dbReference type="GO" id="GO:0032259">
    <property type="term" value="P:methylation"/>
    <property type="evidence" value="ECO:0007669"/>
    <property type="project" value="UniProtKB-KW"/>
</dbReference>
<dbReference type="GO" id="GO:0006744">
    <property type="term" value="P:ubiquinone biosynthetic process"/>
    <property type="evidence" value="ECO:0000318"/>
    <property type="project" value="GO_Central"/>
</dbReference>
<dbReference type="CDD" id="cd02440">
    <property type="entry name" value="AdoMet_MTases"/>
    <property type="match status" value="1"/>
</dbReference>
<dbReference type="FunFam" id="3.40.50.150:FF:000014">
    <property type="entry name" value="Ubiquinone/menaquinone biosynthesis C-methyltransferase UbiE"/>
    <property type="match status" value="1"/>
</dbReference>
<dbReference type="Gene3D" id="3.40.50.150">
    <property type="entry name" value="Vaccinia Virus protein VP39"/>
    <property type="match status" value="1"/>
</dbReference>
<dbReference type="HAMAP" id="MF_01813">
    <property type="entry name" value="MenG_UbiE_methyltr"/>
    <property type="match status" value="1"/>
</dbReference>
<dbReference type="InterPro" id="IPR029063">
    <property type="entry name" value="SAM-dependent_MTases_sf"/>
</dbReference>
<dbReference type="InterPro" id="IPR004033">
    <property type="entry name" value="UbiE/COQ5_MeTrFase"/>
</dbReference>
<dbReference type="InterPro" id="IPR023576">
    <property type="entry name" value="UbiE/COQ5_MeTrFase_CS"/>
</dbReference>
<dbReference type="NCBIfam" id="TIGR01934">
    <property type="entry name" value="MenG_MenH_UbiE"/>
    <property type="match status" value="1"/>
</dbReference>
<dbReference type="NCBIfam" id="NF001240">
    <property type="entry name" value="PRK00216.1-1"/>
    <property type="match status" value="1"/>
</dbReference>
<dbReference type="NCBIfam" id="NF001242">
    <property type="entry name" value="PRK00216.1-3"/>
    <property type="match status" value="1"/>
</dbReference>
<dbReference type="NCBIfam" id="NF001244">
    <property type="entry name" value="PRK00216.1-5"/>
    <property type="match status" value="1"/>
</dbReference>
<dbReference type="PANTHER" id="PTHR43591:SF24">
    <property type="entry name" value="2-METHOXY-6-POLYPRENYL-1,4-BENZOQUINOL METHYLASE, MITOCHONDRIAL"/>
    <property type="match status" value="1"/>
</dbReference>
<dbReference type="PANTHER" id="PTHR43591">
    <property type="entry name" value="METHYLTRANSFERASE"/>
    <property type="match status" value="1"/>
</dbReference>
<dbReference type="Pfam" id="PF01209">
    <property type="entry name" value="Ubie_methyltran"/>
    <property type="match status" value="1"/>
</dbReference>
<dbReference type="SUPFAM" id="SSF53335">
    <property type="entry name" value="S-adenosyl-L-methionine-dependent methyltransferases"/>
    <property type="match status" value="1"/>
</dbReference>
<dbReference type="PROSITE" id="PS51608">
    <property type="entry name" value="SAM_MT_UBIE"/>
    <property type="match status" value="1"/>
</dbReference>
<dbReference type="PROSITE" id="PS01183">
    <property type="entry name" value="UBIE_1"/>
    <property type="match status" value="1"/>
</dbReference>
<dbReference type="PROSITE" id="PS01184">
    <property type="entry name" value="UBIE_2"/>
    <property type="match status" value="1"/>
</dbReference>
<protein>
    <recommendedName>
        <fullName evidence="1">Ubiquinone/menaquinone biosynthesis C-methyltransferase UbiE</fullName>
        <ecNumber evidence="1">2.1.1.163</ecNumber>
        <ecNumber evidence="1">2.1.1.201</ecNumber>
    </recommendedName>
    <alternativeName>
        <fullName evidence="1">2-methoxy-6-polyprenyl-1,4-benzoquinol methylase</fullName>
    </alternativeName>
    <alternativeName>
        <fullName evidence="1">Demethylmenaquinone methyltransferase</fullName>
    </alternativeName>
</protein>
<feature type="chain" id="PRO_0000193324" description="Ubiquinone/menaquinone biosynthesis C-methyltransferase UbiE">
    <location>
        <begin position="1"/>
        <end position="251"/>
    </location>
</feature>
<feature type="binding site" evidence="1">
    <location>
        <position position="74"/>
    </location>
    <ligand>
        <name>S-adenosyl-L-methionine</name>
        <dbReference type="ChEBI" id="CHEBI:59789"/>
    </ligand>
</feature>
<feature type="binding site" evidence="1">
    <location>
        <position position="95"/>
    </location>
    <ligand>
        <name>S-adenosyl-L-methionine</name>
        <dbReference type="ChEBI" id="CHEBI:59789"/>
    </ligand>
</feature>
<feature type="binding site" evidence="1">
    <location>
        <begin position="123"/>
        <end position="124"/>
    </location>
    <ligand>
        <name>S-adenosyl-L-methionine</name>
        <dbReference type="ChEBI" id="CHEBI:59789"/>
    </ligand>
</feature>
<feature type="binding site" evidence="1">
    <location>
        <position position="140"/>
    </location>
    <ligand>
        <name>S-adenosyl-L-methionine</name>
        <dbReference type="ChEBI" id="CHEBI:59789"/>
    </ligand>
</feature>
<reference key="1">
    <citation type="journal article" date="2001" name="Nature">
        <title>Complete genome sequence of Salmonella enterica serovar Typhimurium LT2.</title>
        <authorList>
            <person name="McClelland M."/>
            <person name="Sanderson K.E."/>
            <person name="Spieth J."/>
            <person name="Clifton S.W."/>
            <person name="Latreille P."/>
            <person name="Courtney L."/>
            <person name="Porwollik S."/>
            <person name="Ali J."/>
            <person name="Dante M."/>
            <person name="Du F."/>
            <person name="Hou S."/>
            <person name="Layman D."/>
            <person name="Leonard S."/>
            <person name="Nguyen C."/>
            <person name="Scott K."/>
            <person name="Holmes A."/>
            <person name="Grewal N."/>
            <person name="Mulvaney E."/>
            <person name="Ryan E."/>
            <person name="Sun H."/>
            <person name="Florea L."/>
            <person name="Miller W."/>
            <person name="Stoneking T."/>
            <person name="Nhan M."/>
            <person name="Waterston R."/>
            <person name="Wilson R.K."/>
        </authorList>
    </citation>
    <scope>NUCLEOTIDE SEQUENCE [LARGE SCALE GENOMIC DNA]</scope>
    <source>
        <strain>LT2 / SGSC1412 / ATCC 700720</strain>
    </source>
</reference>
<organism>
    <name type="scientific">Salmonella typhimurium (strain LT2 / SGSC1412 / ATCC 700720)</name>
    <dbReference type="NCBI Taxonomy" id="99287"/>
    <lineage>
        <taxon>Bacteria</taxon>
        <taxon>Pseudomonadati</taxon>
        <taxon>Pseudomonadota</taxon>
        <taxon>Gammaproteobacteria</taxon>
        <taxon>Enterobacterales</taxon>
        <taxon>Enterobacteriaceae</taxon>
        <taxon>Salmonella</taxon>
    </lineage>
</organism>
<sequence>MVEDSQETTHFGFQTVAKEQKADMVAHVFHSVASKYDVMNDLMSFGIHRLWKRFTIDCSGVRRGQTVLDLAGGTGDLTAKFSRMVGETGKVILADINDSMLKMGREKLRNIGVIGNVEYVQANAEALPFPDNTFDCITISFGLRNVTEKEKALRSMFRVLKPGGRLLVLEFSKPIIEPLSKAYDAYSFHILPRIGSMVANDADSYRYLAESIRMHPDQDTLKAMMQDAGFESVDYYNLTAGVVALHRGYKF</sequence>
<evidence type="ECO:0000255" key="1">
    <source>
        <dbReference type="HAMAP-Rule" id="MF_01813"/>
    </source>
</evidence>
<accession>P0A2K5</accession>
<accession>Q9L6M6</accession>
<proteinExistence type="inferred from homology"/>
<gene>
    <name evidence="1" type="primary">ubiE</name>
    <name type="ordered locus">STM3970</name>
    <name type="ORF">STMD1.19</name>
</gene>